<name>PUCC_RHOSU</name>
<accession>P95656</accession>
<protein>
    <recommendedName>
        <fullName>Protein PucC</fullName>
    </recommendedName>
</protein>
<reference key="1">
    <citation type="journal article" date="1997" name="Biochim. Biophys. Acta">
        <title>Gene cloning and regulation of gene expression of the puc operon from Rhodovulum sulfidophilum.</title>
        <authorList>
            <person name="Hagemann G.E."/>
            <person name="Katsiou E."/>
            <person name="Forkl H."/>
            <person name="Steindorf A.C."/>
            <person name="Tadros M.H."/>
        </authorList>
    </citation>
    <scope>NUCLEOTIDE SEQUENCE [GENOMIC DNA]</scope>
    <source>
        <strain>W4</strain>
    </source>
</reference>
<evidence type="ECO:0000250" key="1"/>
<evidence type="ECO:0000255" key="2"/>
<evidence type="ECO:0000305" key="3"/>
<dbReference type="EMBL" id="U81968">
    <property type="protein sequence ID" value="AAB59008.1"/>
    <property type="molecule type" value="Genomic_DNA"/>
</dbReference>
<dbReference type="STRING" id="35806.A6024_09300"/>
<dbReference type="eggNOG" id="COG2814">
    <property type="taxonomic scope" value="Bacteria"/>
</dbReference>
<dbReference type="GO" id="GO:0030076">
    <property type="term" value="C:light-harvesting complex"/>
    <property type="evidence" value="ECO:0007669"/>
    <property type="project" value="UniProtKB-KW"/>
</dbReference>
<dbReference type="GO" id="GO:0005886">
    <property type="term" value="C:plasma membrane"/>
    <property type="evidence" value="ECO:0007669"/>
    <property type="project" value="UniProtKB-SubCell"/>
</dbReference>
<dbReference type="CDD" id="cd06176">
    <property type="entry name" value="MFS_BCD_PucC-like"/>
    <property type="match status" value="1"/>
</dbReference>
<dbReference type="Gene3D" id="1.20.1250.20">
    <property type="entry name" value="MFS general substrate transporter like domains"/>
    <property type="match status" value="1"/>
</dbReference>
<dbReference type="InterPro" id="IPR036259">
    <property type="entry name" value="MFS_trans_sf"/>
</dbReference>
<dbReference type="InterPro" id="IPR026036">
    <property type="entry name" value="PucC"/>
</dbReference>
<dbReference type="InterPro" id="IPR004896">
    <property type="entry name" value="PucC-rel"/>
</dbReference>
<dbReference type="PANTHER" id="PTHR23538">
    <property type="entry name" value="44.5 KD BACTERIOCHLOROPHYLL SYNTHASE SUBUNIT"/>
    <property type="match status" value="1"/>
</dbReference>
<dbReference type="PANTHER" id="PTHR23538:SF1">
    <property type="entry name" value="44.5 KD BACTERIOCHLOROPHYLL SYNTHASE SUBUNIT"/>
    <property type="match status" value="1"/>
</dbReference>
<dbReference type="Pfam" id="PF03209">
    <property type="entry name" value="PUCC"/>
    <property type="match status" value="1"/>
</dbReference>
<dbReference type="PIRSF" id="PIRSF016565">
    <property type="entry name" value="PucC"/>
    <property type="match status" value="1"/>
</dbReference>
<dbReference type="SUPFAM" id="SSF103473">
    <property type="entry name" value="MFS general substrate transporter"/>
    <property type="match status" value="1"/>
</dbReference>
<gene>
    <name type="primary">pucC</name>
</gene>
<comment type="function">
    <text evidence="1">PucC is required for high-level transcription of the puc operon.</text>
</comment>
<comment type="subcellular location">
    <subcellularLocation>
        <location evidence="3">Cell membrane</location>
        <topology evidence="3">Multi-pass membrane protein</topology>
    </subcellularLocation>
</comment>
<comment type="similarity">
    <text evidence="3">Belongs to the PucC family.</text>
</comment>
<feature type="chain" id="PRO_0000099846" description="Protein PucC">
    <location>
        <begin position="1"/>
        <end position="454"/>
    </location>
</feature>
<feature type="transmembrane region" description="Helical" evidence="2">
    <location>
        <begin position="35"/>
        <end position="55"/>
    </location>
</feature>
<feature type="transmembrane region" description="Helical" evidence="2">
    <location>
        <begin position="70"/>
        <end position="90"/>
    </location>
</feature>
<feature type="transmembrane region" description="Helical" evidence="2">
    <location>
        <begin position="110"/>
        <end position="130"/>
    </location>
</feature>
<feature type="transmembrane region" description="Helical" evidence="2">
    <location>
        <begin position="140"/>
        <end position="160"/>
    </location>
</feature>
<feature type="transmembrane region" description="Helical" evidence="2">
    <location>
        <begin position="180"/>
        <end position="200"/>
    </location>
</feature>
<feature type="transmembrane region" description="Helical" evidence="2">
    <location>
        <begin position="211"/>
        <end position="231"/>
    </location>
</feature>
<feature type="transmembrane region" description="Helical" evidence="2">
    <location>
        <begin position="270"/>
        <end position="290"/>
    </location>
</feature>
<feature type="transmembrane region" description="Helical" evidence="2">
    <location>
        <begin position="299"/>
        <end position="319"/>
    </location>
</feature>
<feature type="transmembrane region" description="Helical" evidence="2">
    <location>
        <begin position="330"/>
        <end position="350"/>
    </location>
</feature>
<feature type="transmembrane region" description="Helical" evidence="2">
    <location>
        <begin position="359"/>
        <end position="379"/>
    </location>
</feature>
<feature type="transmembrane region" description="Helical" evidence="2">
    <location>
        <begin position="391"/>
        <end position="411"/>
    </location>
</feature>
<sequence>MNRLSKMAVNRIATVGPRFLPFAEAASEDLPLSRLLRLSMFQVSVGMAMVLLVGTLNRVMIVELEVPASIVGIMISLPLLFAPFRALIGFKSDTHKSALGWRRVPYIWKGTLLQWGGFAIMPFALIVLSGQESAAGAPEWIGILSAAVSFLLVGAGVHTVQTVGLALATDLAPREDQPNVVGLMYVMLLVGMIVSALLFGMWLEDFYHAKLIKVIQGAAVATMVFNVIALWKMEARDRVRARQRLEGDPEPSFREAWGLFTRGPNARRLLWVIGLGTLGFGLSDVLLEPFGGQVLDMSVAATTKLTAAVAGGTLVGFAWASRVLSRGYDPMAMAGWGAVVGLPAFAIITFSATLQSEPVFVFGTMMAGFGAGLFSHGTLTATMRSAPKAQVGLALGAWGAVQATSAGAGIALGGVFRDAVRIRRSAISSARRPYSLSTRSNWRCWSRPSSSATG</sequence>
<proteinExistence type="inferred from homology"/>
<organism>
    <name type="scientific">Rhodovulum sulfidophilum</name>
    <name type="common">Rhodobacter sulfidophilus</name>
    <dbReference type="NCBI Taxonomy" id="35806"/>
    <lineage>
        <taxon>Bacteria</taxon>
        <taxon>Pseudomonadati</taxon>
        <taxon>Pseudomonadota</taxon>
        <taxon>Alphaproteobacteria</taxon>
        <taxon>Rhodobacterales</taxon>
        <taxon>Paracoccaceae</taxon>
        <taxon>Rhodovulum</taxon>
    </lineage>
</organism>
<keyword id="KW-0042">Antenna complex</keyword>
<keyword id="KW-1003">Cell membrane</keyword>
<keyword id="KW-0472">Membrane</keyword>
<keyword id="KW-0812">Transmembrane</keyword>
<keyword id="KW-1133">Transmembrane helix</keyword>